<proteinExistence type="evidence at protein level"/>
<comment type="function">
    <text>In addition to acetyl-CoA (100%), the enzyme accepts propionyl-CoA (60%) and butyryl-CoA (30%).</text>
</comment>
<comment type="catalytic activity">
    <reaction>
        <text>acetyl-CoA + phosphate = acetyl phosphate + CoA</text>
        <dbReference type="Rhea" id="RHEA:19521"/>
        <dbReference type="ChEBI" id="CHEBI:22191"/>
        <dbReference type="ChEBI" id="CHEBI:43474"/>
        <dbReference type="ChEBI" id="CHEBI:57287"/>
        <dbReference type="ChEBI" id="CHEBI:57288"/>
        <dbReference type="EC" id="2.3.1.8"/>
    </reaction>
</comment>
<comment type="biophysicochemical properties">
    <temperatureDependence>
        <text>Optimum temperature is 90 degrees Celsius.</text>
    </temperatureDependence>
</comment>
<comment type="pathway">
    <text>Metabolic intermediate biosynthesis; acetyl-CoA biosynthesis; acetyl-CoA from acetate: step 2/2.</text>
</comment>
<comment type="subunit">
    <text>Homotetramer.</text>
</comment>
<comment type="subcellular location">
    <subcellularLocation>
        <location evidence="1">Cytoplasm</location>
    </subcellularLocation>
</comment>
<comment type="similarity">
    <text evidence="1">Belongs to the phosphate acetyltransferase and butyryltransferase family.</text>
</comment>
<feature type="chain" id="PRO_0000179149" description="Phosphate acetyltransferase">
    <location>
        <begin position="1"/>
        <end position="294"/>
    </location>
</feature>
<feature type="sequence conflict" description="In Ref. 2; AA sequence." evidence="1" ref="2">
    <original>R</original>
    <variation>Y</variation>
    <location>
        <position position="11"/>
    </location>
</feature>
<keyword id="KW-0012">Acyltransferase</keyword>
<keyword id="KW-0963">Cytoplasm</keyword>
<keyword id="KW-0903">Direct protein sequencing</keyword>
<keyword id="KW-1185">Reference proteome</keyword>
<keyword id="KW-0808">Transferase</keyword>
<gene>
    <name type="primary">pta</name>
    <name type="ordered locus">TM_1130</name>
</gene>
<sequence>MFLEKLVEMARGKGKKLAVAAANDDHVIEAVYRAWRERVCEPVLFGPEEEITRIIEELVPEWKNPQIIDCPPEEAGRLAVEAVSKGECDFLMKGKIKTGDLMKIYLDERYGLRTGKTMAMVSVMEIPDFPRPLIISDPGMLISPTLEQKVDMIEHCVRVANVMGLETPKVAVVGAIEVVNPKMPITMEAAILSKMNQRGQIKGCIVDGPFALDNVVSEEAAKKKGIQSPVAGKADILILPDIEAANILYKALVFLAKAKSASTILGGKVPVVLTSRADSEETKFYSIALSAVFA</sequence>
<protein>
    <recommendedName>
        <fullName>Phosphate acetyltransferase</fullName>
        <ecNumber>2.3.1.8</ecNumber>
    </recommendedName>
    <alternativeName>
        <fullName>Phosphotransacetylase</fullName>
    </alternativeName>
</protein>
<dbReference type="EC" id="2.3.1.8"/>
<dbReference type="EMBL" id="AE000512">
    <property type="protein sequence ID" value="AAD36206.1"/>
    <property type="molecule type" value="Genomic_DNA"/>
</dbReference>
<dbReference type="PIR" id="G72293">
    <property type="entry name" value="G72293"/>
</dbReference>
<dbReference type="RefSeq" id="NP_228936.1">
    <property type="nucleotide sequence ID" value="NC_000853.1"/>
</dbReference>
<dbReference type="RefSeq" id="WP_004080280.1">
    <property type="nucleotide sequence ID" value="NC_000853.1"/>
</dbReference>
<dbReference type="SMR" id="Q9X0L4"/>
<dbReference type="DIP" id="DIP-2900N"/>
<dbReference type="FunCoup" id="Q9X0L4">
    <property type="interactions" value="4"/>
</dbReference>
<dbReference type="STRING" id="243274.TM_1130"/>
<dbReference type="PaxDb" id="243274-THEMA_08695"/>
<dbReference type="EnsemblBacteria" id="AAD36206">
    <property type="protein sequence ID" value="AAD36206"/>
    <property type="gene ID" value="TM_1130"/>
</dbReference>
<dbReference type="KEGG" id="tma:TM1130"/>
<dbReference type="KEGG" id="tmi:THEMA_08695"/>
<dbReference type="KEGG" id="tmm:Tmari_1136"/>
<dbReference type="KEGG" id="tmw:THMA_1153"/>
<dbReference type="eggNOG" id="COG0280">
    <property type="taxonomic scope" value="Bacteria"/>
</dbReference>
<dbReference type="InParanoid" id="Q9X0L4"/>
<dbReference type="OrthoDB" id="9774179at2"/>
<dbReference type="BioCyc" id="MetaCyc:MONOMER-427"/>
<dbReference type="UniPathway" id="UPA00340">
    <property type="reaction ID" value="UER00459"/>
</dbReference>
<dbReference type="Proteomes" id="UP000008183">
    <property type="component" value="Chromosome"/>
</dbReference>
<dbReference type="GO" id="GO:0005737">
    <property type="term" value="C:cytoplasm"/>
    <property type="evidence" value="ECO:0007669"/>
    <property type="project" value="UniProtKB-SubCell"/>
</dbReference>
<dbReference type="GO" id="GO:0008959">
    <property type="term" value="F:phosphate acetyltransferase activity"/>
    <property type="evidence" value="ECO:0007669"/>
    <property type="project" value="UniProtKB-EC"/>
</dbReference>
<dbReference type="GO" id="GO:0006085">
    <property type="term" value="P:acetyl-CoA biosynthetic process"/>
    <property type="evidence" value="ECO:0007669"/>
    <property type="project" value="UniProtKB-UniPathway"/>
</dbReference>
<dbReference type="Gene3D" id="3.40.718.10">
    <property type="entry name" value="Isopropylmalate Dehydrogenase"/>
    <property type="match status" value="1"/>
</dbReference>
<dbReference type="InterPro" id="IPR012147">
    <property type="entry name" value="P_Ac_Bu_trans"/>
</dbReference>
<dbReference type="InterPro" id="IPR050500">
    <property type="entry name" value="Phos_Acetyltrans/Butyryltrans"/>
</dbReference>
<dbReference type="InterPro" id="IPR002505">
    <property type="entry name" value="PTA_PTB"/>
</dbReference>
<dbReference type="NCBIfam" id="NF006045">
    <property type="entry name" value="PRK08190.1"/>
    <property type="match status" value="1"/>
</dbReference>
<dbReference type="PANTHER" id="PTHR43356">
    <property type="entry name" value="PHOSPHATE ACETYLTRANSFERASE"/>
    <property type="match status" value="1"/>
</dbReference>
<dbReference type="PANTHER" id="PTHR43356:SF2">
    <property type="entry name" value="PHOSPHATE ACETYLTRANSFERASE"/>
    <property type="match status" value="1"/>
</dbReference>
<dbReference type="Pfam" id="PF01515">
    <property type="entry name" value="PTA_PTB"/>
    <property type="match status" value="1"/>
</dbReference>
<dbReference type="PIRSF" id="PIRSF000428">
    <property type="entry name" value="P_Ac_trans"/>
    <property type="match status" value="1"/>
</dbReference>
<dbReference type="SUPFAM" id="SSF53659">
    <property type="entry name" value="Isocitrate/Isopropylmalate dehydrogenase-like"/>
    <property type="match status" value="1"/>
</dbReference>
<reference key="1">
    <citation type="journal article" date="1999" name="Nature">
        <title>Evidence for lateral gene transfer between Archaea and Bacteria from genome sequence of Thermotoga maritima.</title>
        <authorList>
            <person name="Nelson K.E."/>
            <person name="Clayton R.A."/>
            <person name="Gill S.R."/>
            <person name="Gwinn M.L."/>
            <person name="Dodson R.J."/>
            <person name="Haft D.H."/>
            <person name="Hickey E.K."/>
            <person name="Peterson J.D."/>
            <person name="Nelson W.C."/>
            <person name="Ketchum K.A."/>
            <person name="McDonald L.A."/>
            <person name="Utterback T.R."/>
            <person name="Malek J.A."/>
            <person name="Linher K.D."/>
            <person name="Garrett M.M."/>
            <person name="Stewart A.M."/>
            <person name="Cotton M.D."/>
            <person name="Pratt M.S."/>
            <person name="Phillips C.A."/>
            <person name="Richardson D.L."/>
            <person name="Heidelberg J.F."/>
            <person name="Sutton G.G."/>
            <person name="Fleischmann R.D."/>
            <person name="Eisen J.A."/>
            <person name="White O."/>
            <person name="Salzberg S.L."/>
            <person name="Smith H.O."/>
            <person name="Venter J.C."/>
            <person name="Fraser C.M."/>
        </authorList>
    </citation>
    <scope>NUCLEOTIDE SEQUENCE [LARGE SCALE GENOMIC DNA]</scope>
    <source>
        <strain>ATCC 43589 / DSM 3109 / JCM 10099 / NBRC 100826 / MSB8</strain>
    </source>
</reference>
<reference key="2">
    <citation type="journal article" date="1999" name="J. Bacteriol.">
        <title>Purification and characterization of two extremely thermostable enzymes, phosphate acetyltransferase and acetate kinase, from the hyperthermophilic eubacterium Thermotoga maritima.</title>
        <authorList>
            <person name="Bock A.-K."/>
            <person name="Glasemacher J."/>
            <person name="Schmidt R."/>
            <person name="Schoenheit P."/>
        </authorList>
    </citation>
    <scope>PROTEIN SEQUENCE OF 1-39</scope>
    <scope>CHARACTERIZATION</scope>
</reference>
<evidence type="ECO:0000305" key="1"/>
<accession>Q9X0L4</accession>
<organism>
    <name type="scientific">Thermotoga maritima (strain ATCC 43589 / DSM 3109 / JCM 10099 / NBRC 100826 / MSB8)</name>
    <dbReference type="NCBI Taxonomy" id="243274"/>
    <lineage>
        <taxon>Bacteria</taxon>
        <taxon>Thermotogati</taxon>
        <taxon>Thermotogota</taxon>
        <taxon>Thermotogae</taxon>
        <taxon>Thermotogales</taxon>
        <taxon>Thermotogaceae</taxon>
        <taxon>Thermotoga</taxon>
    </lineage>
</organism>
<name>PTAS_THEMA</name>